<feature type="chain" id="PRO_1000076012" description="S-adenosylmethionine:tRNA ribosyltransferase-isomerase">
    <location>
        <begin position="1"/>
        <end position="348"/>
    </location>
</feature>
<reference key="1">
    <citation type="journal article" date="2012" name="Stand. Genomic Sci.">
        <title>Complete genome sequence of Polynucleobacter necessarius subsp. asymbioticus type strain (QLW-P1DMWA-1(T)).</title>
        <authorList>
            <person name="Meincke L."/>
            <person name="Copeland A."/>
            <person name="Lapidus A."/>
            <person name="Lucas S."/>
            <person name="Berry K.W."/>
            <person name="Del Rio T.G."/>
            <person name="Hammon N."/>
            <person name="Dalin E."/>
            <person name="Tice H."/>
            <person name="Pitluck S."/>
            <person name="Richardson P."/>
            <person name="Bruce D."/>
            <person name="Goodwin L."/>
            <person name="Han C."/>
            <person name="Tapia R."/>
            <person name="Detter J.C."/>
            <person name="Schmutz J."/>
            <person name="Brettin T."/>
            <person name="Larimer F."/>
            <person name="Land M."/>
            <person name="Hauser L."/>
            <person name="Kyrpides N.C."/>
            <person name="Ivanova N."/>
            <person name="Goker M."/>
            <person name="Woyke T."/>
            <person name="Wu Q.L."/>
            <person name="Pockl M."/>
            <person name="Hahn M.W."/>
            <person name="Klenk H.P."/>
        </authorList>
    </citation>
    <scope>NUCLEOTIDE SEQUENCE [LARGE SCALE GENOMIC DNA]</scope>
    <source>
        <strain>DSM 18221 / CIP 109841 / QLW-P1DMWA-1</strain>
    </source>
</reference>
<name>QUEA_POLAQ</name>
<gene>
    <name evidence="1" type="primary">queA</name>
    <name type="ordered locus">Pnuc_1788</name>
</gene>
<organism>
    <name type="scientific">Polynucleobacter asymbioticus (strain DSM 18221 / CIP 109841 / QLW-P1DMWA-1)</name>
    <name type="common">Polynucleobacter necessarius subsp. asymbioticus</name>
    <dbReference type="NCBI Taxonomy" id="312153"/>
    <lineage>
        <taxon>Bacteria</taxon>
        <taxon>Pseudomonadati</taxon>
        <taxon>Pseudomonadota</taxon>
        <taxon>Betaproteobacteria</taxon>
        <taxon>Burkholderiales</taxon>
        <taxon>Burkholderiaceae</taxon>
        <taxon>Polynucleobacter</taxon>
    </lineage>
</organism>
<keyword id="KW-0963">Cytoplasm</keyword>
<keyword id="KW-0671">Queuosine biosynthesis</keyword>
<keyword id="KW-1185">Reference proteome</keyword>
<keyword id="KW-0949">S-adenosyl-L-methionine</keyword>
<keyword id="KW-0808">Transferase</keyword>
<accession>A4SZT7</accession>
<protein>
    <recommendedName>
        <fullName evidence="1">S-adenosylmethionine:tRNA ribosyltransferase-isomerase</fullName>
        <ecNumber evidence="1">2.4.99.17</ecNumber>
    </recommendedName>
    <alternativeName>
        <fullName evidence="1">Queuosine biosynthesis protein QueA</fullName>
    </alternativeName>
</protein>
<dbReference type="EC" id="2.4.99.17" evidence="1"/>
<dbReference type="EMBL" id="CP000655">
    <property type="protein sequence ID" value="ABP35001.1"/>
    <property type="molecule type" value="Genomic_DNA"/>
</dbReference>
<dbReference type="RefSeq" id="WP_011903624.1">
    <property type="nucleotide sequence ID" value="NC_009379.1"/>
</dbReference>
<dbReference type="SMR" id="A4SZT7"/>
<dbReference type="GeneID" id="31482177"/>
<dbReference type="KEGG" id="pnu:Pnuc_1788"/>
<dbReference type="eggNOG" id="COG0809">
    <property type="taxonomic scope" value="Bacteria"/>
</dbReference>
<dbReference type="HOGENOM" id="CLU_039110_1_0_4"/>
<dbReference type="UniPathway" id="UPA00392"/>
<dbReference type="Proteomes" id="UP000000231">
    <property type="component" value="Chromosome"/>
</dbReference>
<dbReference type="GO" id="GO:0005737">
    <property type="term" value="C:cytoplasm"/>
    <property type="evidence" value="ECO:0007669"/>
    <property type="project" value="UniProtKB-SubCell"/>
</dbReference>
<dbReference type="GO" id="GO:0051075">
    <property type="term" value="F:S-adenosylmethionine:tRNA ribosyltransferase-isomerase activity"/>
    <property type="evidence" value="ECO:0007669"/>
    <property type="project" value="UniProtKB-EC"/>
</dbReference>
<dbReference type="GO" id="GO:0008616">
    <property type="term" value="P:queuosine biosynthetic process"/>
    <property type="evidence" value="ECO:0007669"/>
    <property type="project" value="UniProtKB-UniRule"/>
</dbReference>
<dbReference type="GO" id="GO:0002099">
    <property type="term" value="P:tRNA wobble guanine modification"/>
    <property type="evidence" value="ECO:0007669"/>
    <property type="project" value="TreeGrafter"/>
</dbReference>
<dbReference type="FunFam" id="3.40.1780.10:FF:000001">
    <property type="entry name" value="S-adenosylmethionine:tRNA ribosyltransferase-isomerase"/>
    <property type="match status" value="1"/>
</dbReference>
<dbReference type="Gene3D" id="2.40.10.240">
    <property type="entry name" value="QueA-like"/>
    <property type="match status" value="1"/>
</dbReference>
<dbReference type="Gene3D" id="3.40.1780.10">
    <property type="entry name" value="QueA-like"/>
    <property type="match status" value="1"/>
</dbReference>
<dbReference type="HAMAP" id="MF_00113">
    <property type="entry name" value="QueA"/>
    <property type="match status" value="1"/>
</dbReference>
<dbReference type="InterPro" id="IPR003699">
    <property type="entry name" value="QueA"/>
</dbReference>
<dbReference type="InterPro" id="IPR042118">
    <property type="entry name" value="QueA_dom1"/>
</dbReference>
<dbReference type="InterPro" id="IPR042119">
    <property type="entry name" value="QueA_dom2"/>
</dbReference>
<dbReference type="InterPro" id="IPR036100">
    <property type="entry name" value="QueA_sf"/>
</dbReference>
<dbReference type="NCBIfam" id="NF001140">
    <property type="entry name" value="PRK00147.1"/>
    <property type="match status" value="1"/>
</dbReference>
<dbReference type="NCBIfam" id="TIGR00113">
    <property type="entry name" value="queA"/>
    <property type="match status" value="1"/>
</dbReference>
<dbReference type="PANTHER" id="PTHR30307">
    <property type="entry name" value="S-ADENOSYLMETHIONINE:TRNA RIBOSYLTRANSFERASE-ISOMERASE"/>
    <property type="match status" value="1"/>
</dbReference>
<dbReference type="PANTHER" id="PTHR30307:SF0">
    <property type="entry name" value="S-ADENOSYLMETHIONINE:TRNA RIBOSYLTRANSFERASE-ISOMERASE"/>
    <property type="match status" value="1"/>
</dbReference>
<dbReference type="Pfam" id="PF02547">
    <property type="entry name" value="Queuosine_synth"/>
    <property type="match status" value="1"/>
</dbReference>
<dbReference type="SUPFAM" id="SSF111337">
    <property type="entry name" value="QueA-like"/>
    <property type="match status" value="1"/>
</dbReference>
<comment type="function">
    <text evidence="1">Transfers and isomerizes the ribose moiety from AdoMet to the 7-aminomethyl group of 7-deazaguanine (preQ1-tRNA) to give epoxyqueuosine (oQ-tRNA).</text>
</comment>
<comment type="catalytic activity">
    <reaction evidence="1">
        <text>7-aminomethyl-7-carbaguanosine(34) in tRNA + S-adenosyl-L-methionine = epoxyqueuosine(34) in tRNA + adenine + L-methionine + 2 H(+)</text>
        <dbReference type="Rhea" id="RHEA:32155"/>
        <dbReference type="Rhea" id="RHEA-COMP:10342"/>
        <dbReference type="Rhea" id="RHEA-COMP:18582"/>
        <dbReference type="ChEBI" id="CHEBI:15378"/>
        <dbReference type="ChEBI" id="CHEBI:16708"/>
        <dbReference type="ChEBI" id="CHEBI:57844"/>
        <dbReference type="ChEBI" id="CHEBI:59789"/>
        <dbReference type="ChEBI" id="CHEBI:82833"/>
        <dbReference type="ChEBI" id="CHEBI:194443"/>
        <dbReference type="EC" id="2.4.99.17"/>
    </reaction>
</comment>
<comment type="pathway">
    <text evidence="1">tRNA modification; tRNA-queuosine biosynthesis.</text>
</comment>
<comment type="subunit">
    <text evidence="1">Monomer.</text>
</comment>
<comment type="subcellular location">
    <subcellularLocation>
        <location evidence="1">Cytoplasm</location>
    </subcellularLocation>
</comment>
<comment type="similarity">
    <text evidence="1">Belongs to the QueA family.</text>
</comment>
<sequence>MQLSDFNYELPPELIAQHPLANRTDSRLLEVRADGMNHAHLVDRQFKDILILAQPGDLLVFNDTKVIPARLHGKKETGGNVELLIERISGEKQAWVQIRASKVPKTGSTVHIYNQSGETFSVEMIGYDGRFYEVLFPDHVFSLLERFGKLPLPPYIEHQPDGEDAQRYQTVVAKNPGAVAAPTAGLHFDEVILQKLKDVGVNQATVTLHVGAGTFTPVREEDLSKHQMHYEWFSIPKETLQAIEKTKKNGGRIIAVGTTSLRALESQANSQQSSGETNLFITPGYQFKVVDCLLTNFHLPKSTLLMLVSAFAGVDNIRSAYQHAINQQYRFFSYGDAMFLCRLENIKP</sequence>
<proteinExistence type="inferred from homology"/>
<evidence type="ECO:0000255" key="1">
    <source>
        <dbReference type="HAMAP-Rule" id="MF_00113"/>
    </source>
</evidence>